<protein>
    <recommendedName>
        <fullName evidence="1">Bifunctional protein GlmU</fullName>
    </recommendedName>
    <domain>
        <recommendedName>
            <fullName evidence="1">UDP-N-acetylglucosamine pyrophosphorylase</fullName>
            <ecNumber evidence="1">2.7.7.23</ecNumber>
        </recommendedName>
        <alternativeName>
            <fullName evidence="1">N-acetylglucosamine-1-phosphate uridyltransferase</fullName>
        </alternativeName>
    </domain>
    <domain>
        <recommendedName>
            <fullName evidence="1">Glucosamine-1-phosphate N-acetyltransferase</fullName>
            <ecNumber evidence="1">2.3.1.157</ecNumber>
        </recommendedName>
    </domain>
</protein>
<organism>
    <name type="scientific">Acaryochloris marina (strain MBIC 11017)</name>
    <dbReference type="NCBI Taxonomy" id="329726"/>
    <lineage>
        <taxon>Bacteria</taxon>
        <taxon>Bacillati</taxon>
        <taxon>Cyanobacteriota</taxon>
        <taxon>Cyanophyceae</taxon>
        <taxon>Acaryochloridales</taxon>
        <taxon>Acaryochloridaceae</taxon>
        <taxon>Acaryochloris</taxon>
    </lineage>
</organism>
<keyword id="KW-0012">Acyltransferase</keyword>
<keyword id="KW-0133">Cell shape</keyword>
<keyword id="KW-0961">Cell wall biogenesis/degradation</keyword>
<keyword id="KW-0963">Cytoplasm</keyword>
<keyword id="KW-0460">Magnesium</keyword>
<keyword id="KW-0479">Metal-binding</keyword>
<keyword id="KW-0511">Multifunctional enzyme</keyword>
<keyword id="KW-0548">Nucleotidyltransferase</keyword>
<keyword id="KW-0573">Peptidoglycan synthesis</keyword>
<keyword id="KW-1185">Reference proteome</keyword>
<keyword id="KW-0677">Repeat</keyword>
<keyword id="KW-0808">Transferase</keyword>
<evidence type="ECO:0000255" key="1">
    <source>
        <dbReference type="HAMAP-Rule" id="MF_01631"/>
    </source>
</evidence>
<comment type="function">
    <text evidence="1">Catalyzes the last two sequential reactions in the de novo biosynthetic pathway for UDP-N-acetylglucosamine (UDP-GlcNAc). The C-terminal domain catalyzes the transfer of acetyl group from acetyl coenzyme A to glucosamine-1-phosphate (GlcN-1-P) to produce N-acetylglucosamine-1-phosphate (GlcNAc-1-P), which is converted into UDP-GlcNAc by the transfer of uridine 5-monophosphate (from uridine 5-triphosphate), a reaction catalyzed by the N-terminal domain.</text>
</comment>
<comment type="catalytic activity">
    <reaction evidence="1">
        <text>alpha-D-glucosamine 1-phosphate + acetyl-CoA = N-acetyl-alpha-D-glucosamine 1-phosphate + CoA + H(+)</text>
        <dbReference type="Rhea" id="RHEA:13725"/>
        <dbReference type="ChEBI" id="CHEBI:15378"/>
        <dbReference type="ChEBI" id="CHEBI:57287"/>
        <dbReference type="ChEBI" id="CHEBI:57288"/>
        <dbReference type="ChEBI" id="CHEBI:57776"/>
        <dbReference type="ChEBI" id="CHEBI:58516"/>
        <dbReference type="EC" id="2.3.1.157"/>
    </reaction>
</comment>
<comment type="catalytic activity">
    <reaction evidence="1">
        <text>N-acetyl-alpha-D-glucosamine 1-phosphate + UTP + H(+) = UDP-N-acetyl-alpha-D-glucosamine + diphosphate</text>
        <dbReference type="Rhea" id="RHEA:13509"/>
        <dbReference type="ChEBI" id="CHEBI:15378"/>
        <dbReference type="ChEBI" id="CHEBI:33019"/>
        <dbReference type="ChEBI" id="CHEBI:46398"/>
        <dbReference type="ChEBI" id="CHEBI:57705"/>
        <dbReference type="ChEBI" id="CHEBI:57776"/>
        <dbReference type="EC" id="2.7.7.23"/>
    </reaction>
</comment>
<comment type="cofactor">
    <cofactor evidence="1">
        <name>Mg(2+)</name>
        <dbReference type="ChEBI" id="CHEBI:18420"/>
    </cofactor>
    <text evidence="1">Binds 1 Mg(2+) ion per subunit.</text>
</comment>
<comment type="pathway">
    <text evidence="1">Nucleotide-sugar biosynthesis; UDP-N-acetyl-alpha-D-glucosamine biosynthesis; N-acetyl-alpha-D-glucosamine 1-phosphate from alpha-D-glucosamine 6-phosphate (route II): step 2/2.</text>
</comment>
<comment type="pathway">
    <text evidence="1">Nucleotide-sugar biosynthesis; UDP-N-acetyl-alpha-D-glucosamine biosynthesis; UDP-N-acetyl-alpha-D-glucosamine from N-acetyl-alpha-D-glucosamine 1-phosphate: step 1/1.</text>
</comment>
<comment type="pathway">
    <text evidence="1">Bacterial outer membrane biogenesis; LPS lipid A biosynthesis.</text>
</comment>
<comment type="subunit">
    <text evidence="1">Homotrimer.</text>
</comment>
<comment type="subcellular location">
    <subcellularLocation>
        <location evidence="1">Cytoplasm</location>
    </subcellularLocation>
</comment>
<comment type="similarity">
    <text evidence="1">In the N-terminal section; belongs to the N-acetylglucosamine-1-phosphate uridyltransferase family.</text>
</comment>
<comment type="similarity">
    <text evidence="1">In the C-terminal section; belongs to the transferase hexapeptide repeat family.</text>
</comment>
<sequence length="455" mass="49761">MIAVAILAAGKGTRMRSNLPKVLHQLGGKSLIERVLSSTQNLSPSRQIVIVGYSADQVRTEMQGWPNLEFVEQTEQLGTGHAVQQVLPVMEGFEGDLLVLNGDVPLLRPGTLQKMLATHQEHQNAATILTAQLPNPKGYGRVFCDAQMHLQEIIEDRDCTPAQRQNQRINAGVYCFRWSALAKVLPNLKAENDQKEYYLTDAVNYLDPVMVLDVDDYQEILGINDRKQLATAYKILQDRIKDDWLVAGVTIMDPDSITIDETVELGTDVIIEPQTHLRGDTKIDTGSRIGPGSLIENSHIGTNVQVLYSVISDSRVGDNSRIGPYTHLRGNVQIGEKCRVGNFVEMKKTTIGDRTNVAHLSYLGDATLGTQVNIGAGTITANYDGVNKHPTQIGDRTKTGANSVLVAPITLGANVTVAAGSTITKNVDDDVLVVARQRQSVLPGWRPISSKQTEK</sequence>
<name>GLMU_ACAM1</name>
<proteinExistence type="inferred from homology"/>
<reference key="1">
    <citation type="journal article" date="2008" name="Proc. Natl. Acad. Sci. U.S.A.">
        <title>Niche adaptation and genome expansion in the chlorophyll d-producing cyanobacterium Acaryochloris marina.</title>
        <authorList>
            <person name="Swingley W.D."/>
            <person name="Chen M."/>
            <person name="Cheung P.C."/>
            <person name="Conrad A.L."/>
            <person name="Dejesa L.C."/>
            <person name="Hao J."/>
            <person name="Honchak B.M."/>
            <person name="Karbach L.E."/>
            <person name="Kurdoglu A."/>
            <person name="Lahiri S."/>
            <person name="Mastrian S.D."/>
            <person name="Miyashita H."/>
            <person name="Page L."/>
            <person name="Ramakrishna P."/>
            <person name="Satoh S."/>
            <person name="Sattley W.M."/>
            <person name="Shimada Y."/>
            <person name="Taylor H.L."/>
            <person name="Tomo T."/>
            <person name="Tsuchiya T."/>
            <person name="Wang Z.T."/>
            <person name="Raymond J."/>
            <person name="Mimuro M."/>
            <person name="Blankenship R.E."/>
            <person name="Touchman J.W."/>
        </authorList>
    </citation>
    <scope>NUCLEOTIDE SEQUENCE [LARGE SCALE GENOMIC DNA]</scope>
    <source>
        <strain>MBIC 11017</strain>
    </source>
</reference>
<accession>B0C3K5</accession>
<feature type="chain" id="PRO_1000088121" description="Bifunctional protein GlmU">
    <location>
        <begin position="1"/>
        <end position="455"/>
    </location>
</feature>
<feature type="region of interest" description="Pyrophosphorylase" evidence="1">
    <location>
        <begin position="1"/>
        <end position="226"/>
    </location>
</feature>
<feature type="region of interest" description="Linker" evidence="1">
    <location>
        <begin position="227"/>
        <end position="247"/>
    </location>
</feature>
<feature type="region of interest" description="N-acetyltransferase" evidence="1">
    <location>
        <begin position="248"/>
        <end position="455"/>
    </location>
</feature>
<feature type="active site" description="Proton acceptor" evidence="1">
    <location>
        <position position="359"/>
    </location>
</feature>
<feature type="binding site" evidence="1">
    <location>
        <begin position="7"/>
        <end position="10"/>
    </location>
    <ligand>
        <name>UDP-N-acetyl-alpha-D-glucosamine</name>
        <dbReference type="ChEBI" id="CHEBI:57705"/>
    </ligand>
</feature>
<feature type="binding site" evidence="1">
    <location>
        <position position="21"/>
    </location>
    <ligand>
        <name>UDP-N-acetyl-alpha-D-glucosamine</name>
        <dbReference type="ChEBI" id="CHEBI:57705"/>
    </ligand>
</feature>
<feature type="binding site" evidence="1">
    <location>
        <position position="73"/>
    </location>
    <ligand>
        <name>UDP-N-acetyl-alpha-D-glucosamine</name>
        <dbReference type="ChEBI" id="CHEBI:57705"/>
    </ligand>
</feature>
<feature type="binding site" evidence="1">
    <location>
        <begin position="78"/>
        <end position="79"/>
    </location>
    <ligand>
        <name>UDP-N-acetyl-alpha-D-glucosamine</name>
        <dbReference type="ChEBI" id="CHEBI:57705"/>
    </ligand>
</feature>
<feature type="binding site" evidence="1">
    <location>
        <position position="103"/>
    </location>
    <ligand>
        <name>Mg(2+)</name>
        <dbReference type="ChEBI" id="CHEBI:18420"/>
    </ligand>
</feature>
<feature type="binding site" evidence="1">
    <location>
        <position position="140"/>
    </location>
    <ligand>
        <name>UDP-N-acetyl-alpha-D-glucosamine</name>
        <dbReference type="ChEBI" id="CHEBI:57705"/>
    </ligand>
</feature>
<feature type="binding site" evidence="1">
    <location>
        <position position="155"/>
    </location>
    <ligand>
        <name>UDP-N-acetyl-alpha-D-glucosamine</name>
        <dbReference type="ChEBI" id="CHEBI:57705"/>
    </ligand>
</feature>
<feature type="binding site" evidence="1">
    <location>
        <position position="170"/>
    </location>
    <ligand>
        <name>UDP-N-acetyl-alpha-D-glucosamine</name>
        <dbReference type="ChEBI" id="CHEBI:57705"/>
    </ligand>
</feature>
<feature type="binding site" evidence="1">
    <location>
        <position position="224"/>
    </location>
    <ligand>
        <name>Mg(2+)</name>
        <dbReference type="ChEBI" id="CHEBI:18420"/>
    </ligand>
</feature>
<feature type="binding site" evidence="1">
    <location>
        <position position="224"/>
    </location>
    <ligand>
        <name>UDP-N-acetyl-alpha-D-glucosamine</name>
        <dbReference type="ChEBI" id="CHEBI:57705"/>
    </ligand>
</feature>
<feature type="binding site" evidence="1">
    <location>
        <position position="329"/>
    </location>
    <ligand>
        <name>UDP-N-acetyl-alpha-D-glucosamine</name>
        <dbReference type="ChEBI" id="CHEBI:57705"/>
    </ligand>
</feature>
<feature type="binding site" evidence="1">
    <location>
        <position position="347"/>
    </location>
    <ligand>
        <name>UDP-N-acetyl-alpha-D-glucosamine</name>
        <dbReference type="ChEBI" id="CHEBI:57705"/>
    </ligand>
</feature>
<feature type="binding site" evidence="1">
    <location>
        <position position="362"/>
    </location>
    <ligand>
        <name>UDP-N-acetyl-alpha-D-glucosamine</name>
        <dbReference type="ChEBI" id="CHEBI:57705"/>
    </ligand>
</feature>
<feature type="binding site" evidence="1">
    <location>
        <position position="373"/>
    </location>
    <ligand>
        <name>UDP-N-acetyl-alpha-D-glucosamine</name>
        <dbReference type="ChEBI" id="CHEBI:57705"/>
    </ligand>
</feature>
<feature type="binding site" evidence="1">
    <location>
        <position position="376"/>
    </location>
    <ligand>
        <name>acetyl-CoA</name>
        <dbReference type="ChEBI" id="CHEBI:57288"/>
    </ligand>
</feature>
<feature type="binding site" evidence="1">
    <location>
        <begin position="382"/>
        <end position="383"/>
    </location>
    <ligand>
        <name>acetyl-CoA</name>
        <dbReference type="ChEBI" id="CHEBI:57288"/>
    </ligand>
</feature>
<feature type="binding site" evidence="1">
    <location>
        <position position="419"/>
    </location>
    <ligand>
        <name>acetyl-CoA</name>
        <dbReference type="ChEBI" id="CHEBI:57288"/>
    </ligand>
</feature>
<feature type="binding site" evidence="1">
    <location>
        <position position="436"/>
    </location>
    <ligand>
        <name>acetyl-CoA</name>
        <dbReference type="ChEBI" id="CHEBI:57288"/>
    </ligand>
</feature>
<gene>
    <name evidence="1" type="primary">glmU</name>
    <name type="ordered locus">AM1_4868</name>
</gene>
<dbReference type="EC" id="2.7.7.23" evidence="1"/>
<dbReference type="EC" id="2.3.1.157" evidence="1"/>
<dbReference type="EMBL" id="CP000828">
    <property type="protein sequence ID" value="ABW29839.1"/>
    <property type="molecule type" value="Genomic_DNA"/>
</dbReference>
<dbReference type="RefSeq" id="WP_012165117.1">
    <property type="nucleotide sequence ID" value="NC_009925.1"/>
</dbReference>
<dbReference type="SMR" id="B0C3K5"/>
<dbReference type="STRING" id="329726.AM1_4868"/>
<dbReference type="KEGG" id="amr:AM1_4868"/>
<dbReference type="eggNOG" id="COG1207">
    <property type="taxonomic scope" value="Bacteria"/>
</dbReference>
<dbReference type="HOGENOM" id="CLU_029499_15_2_3"/>
<dbReference type="OrthoDB" id="9775031at2"/>
<dbReference type="UniPathway" id="UPA00113">
    <property type="reaction ID" value="UER00532"/>
</dbReference>
<dbReference type="UniPathway" id="UPA00113">
    <property type="reaction ID" value="UER00533"/>
</dbReference>
<dbReference type="UniPathway" id="UPA00973"/>
<dbReference type="Proteomes" id="UP000000268">
    <property type="component" value="Chromosome"/>
</dbReference>
<dbReference type="GO" id="GO:0031470">
    <property type="term" value="C:carboxysome"/>
    <property type="evidence" value="ECO:0007669"/>
    <property type="project" value="UniProtKB-ARBA"/>
</dbReference>
<dbReference type="GO" id="GO:0005737">
    <property type="term" value="C:cytoplasm"/>
    <property type="evidence" value="ECO:0007669"/>
    <property type="project" value="UniProtKB-SubCell"/>
</dbReference>
<dbReference type="GO" id="GO:0016020">
    <property type="term" value="C:membrane"/>
    <property type="evidence" value="ECO:0007669"/>
    <property type="project" value="GOC"/>
</dbReference>
<dbReference type="GO" id="GO:0019134">
    <property type="term" value="F:glucosamine-1-phosphate N-acetyltransferase activity"/>
    <property type="evidence" value="ECO:0007669"/>
    <property type="project" value="UniProtKB-UniRule"/>
</dbReference>
<dbReference type="GO" id="GO:0000287">
    <property type="term" value="F:magnesium ion binding"/>
    <property type="evidence" value="ECO:0007669"/>
    <property type="project" value="UniProtKB-UniRule"/>
</dbReference>
<dbReference type="GO" id="GO:0043886">
    <property type="term" value="F:structural constituent of carboxysome shell"/>
    <property type="evidence" value="ECO:0007669"/>
    <property type="project" value="UniProtKB-ARBA"/>
</dbReference>
<dbReference type="GO" id="GO:0003977">
    <property type="term" value="F:UDP-N-acetylglucosamine diphosphorylase activity"/>
    <property type="evidence" value="ECO:0007669"/>
    <property type="project" value="UniProtKB-UniRule"/>
</dbReference>
<dbReference type="GO" id="GO:0000902">
    <property type="term" value="P:cell morphogenesis"/>
    <property type="evidence" value="ECO:0007669"/>
    <property type="project" value="UniProtKB-UniRule"/>
</dbReference>
<dbReference type="GO" id="GO:0071555">
    <property type="term" value="P:cell wall organization"/>
    <property type="evidence" value="ECO:0007669"/>
    <property type="project" value="UniProtKB-KW"/>
</dbReference>
<dbReference type="GO" id="GO:0009245">
    <property type="term" value="P:lipid A biosynthetic process"/>
    <property type="evidence" value="ECO:0007669"/>
    <property type="project" value="UniProtKB-UniRule"/>
</dbReference>
<dbReference type="GO" id="GO:0009252">
    <property type="term" value="P:peptidoglycan biosynthetic process"/>
    <property type="evidence" value="ECO:0007669"/>
    <property type="project" value="UniProtKB-UniRule"/>
</dbReference>
<dbReference type="GO" id="GO:0008360">
    <property type="term" value="P:regulation of cell shape"/>
    <property type="evidence" value="ECO:0007669"/>
    <property type="project" value="UniProtKB-KW"/>
</dbReference>
<dbReference type="GO" id="GO:0006048">
    <property type="term" value="P:UDP-N-acetylglucosamine biosynthetic process"/>
    <property type="evidence" value="ECO:0007669"/>
    <property type="project" value="UniProtKB-UniPathway"/>
</dbReference>
<dbReference type="CDD" id="cd02540">
    <property type="entry name" value="GT2_GlmU_N_bac"/>
    <property type="match status" value="1"/>
</dbReference>
<dbReference type="CDD" id="cd03353">
    <property type="entry name" value="LbH_GlmU_C"/>
    <property type="match status" value="1"/>
</dbReference>
<dbReference type="Gene3D" id="2.160.10.10">
    <property type="entry name" value="Hexapeptide repeat proteins"/>
    <property type="match status" value="1"/>
</dbReference>
<dbReference type="Gene3D" id="3.90.550.10">
    <property type="entry name" value="Spore Coat Polysaccharide Biosynthesis Protein SpsA, Chain A"/>
    <property type="match status" value="1"/>
</dbReference>
<dbReference type="HAMAP" id="MF_01631">
    <property type="entry name" value="GlmU"/>
    <property type="match status" value="1"/>
</dbReference>
<dbReference type="InterPro" id="IPR005882">
    <property type="entry name" value="Bifunctional_GlmU"/>
</dbReference>
<dbReference type="InterPro" id="IPR050065">
    <property type="entry name" value="GlmU-like"/>
</dbReference>
<dbReference type="InterPro" id="IPR038009">
    <property type="entry name" value="GlmU_C_LbH"/>
</dbReference>
<dbReference type="InterPro" id="IPR001451">
    <property type="entry name" value="Hexapep"/>
</dbReference>
<dbReference type="InterPro" id="IPR025877">
    <property type="entry name" value="MobA-like_NTP_Trfase"/>
</dbReference>
<dbReference type="InterPro" id="IPR029044">
    <property type="entry name" value="Nucleotide-diphossugar_trans"/>
</dbReference>
<dbReference type="InterPro" id="IPR011004">
    <property type="entry name" value="Trimer_LpxA-like_sf"/>
</dbReference>
<dbReference type="NCBIfam" id="TIGR01173">
    <property type="entry name" value="glmU"/>
    <property type="match status" value="1"/>
</dbReference>
<dbReference type="NCBIfam" id="NF010940">
    <property type="entry name" value="PRK14360.1"/>
    <property type="match status" value="1"/>
</dbReference>
<dbReference type="PANTHER" id="PTHR43584:SF3">
    <property type="entry name" value="BIFUNCTIONAL PROTEIN GLMU"/>
    <property type="match status" value="1"/>
</dbReference>
<dbReference type="PANTHER" id="PTHR43584">
    <property type="entry name" value="NUCLEOTIDYL TRANSFERASE"/>
    <property type="match status" value="1"/>
</dbReference>
<dbReference type="Pfam" id="PF00132">
    <property type="entry name" value="Hexapep"/>
    <property type="match status" value="2"/>
</dbReference>
<dbReference type="Pfam" id="PF12804">
    <property type="entry name" value="NTP_transf_3"/>
    <property type="match status" value="1"/>
</dbReference>
<dbReference type="SUPFAM" id="SSF53448">
    <property type="entry name" value="Nucleotide-diphospho-sugar transferases"/>
    <property type="match status" value="1"/>
</dbReference>
<dbReference type="SUPFAM" id="SSF51161">
    <property type="entry name" value="Trimeric LpxA-like enzymes"/>
    <property type="match status" value="1"/>
</dbReference>